<reference key="1">
    <citation type="journal article" date="2004" name="Proc. Natl. Acad. Sci. U.S.A.">
        <title>Genome sequence of Picrophilus torridus and its implications for life around pH 0.</title>
        <authorList>
            <person name="Fuetterer O."/>
            <person name="Angelov A."/>
            <person name="Liesegang H."/>
            <person name="Gottschalk G."/>
            <person name="Schleper C."/>
            <person name="Schepers B."/>
            <person name="Dock C."/>
            <person name="Antranikian G."/>
            <person name="Liebl W."/>
        </authorList>
    </citation>
    <scope>NUCLEOTIDE SEQUENCE [LARGE SCALE GENOMIC DNA]</scope>
    <source>
        <strain>ATCC 700027 / DSM 9790 / JCM 10055 / NBRC 100828 / KAW 2/3</strain>
    </source>
</reference>
<organism>
    <name type="scientific">Picrophilus torridus (strain ATCC 700027 / DSM 9790 / JCM 10055 / NBRC 100828 / KAW 2/3)</name>
    <dbReference type="NCBI Taxonomy" id="1122961"/>
    <lineage>
        <taxon>Archaea</taxon>
        <taxon>Methanobacteriati</taxon>
        <taxon>Thermoplasmatota</taxon>
        <taxon>Thermoplasmata</taxon>
        <taxon>Thermoplasmatales</taxon>
        <taxon>Picrophilaceae</taxon>
        <taxon>Picrophilus</taxon>
    </lineage>
</organism>
<evidence type="ECO:0000255" key="1">
    <source>
        <dbReference type="HAMAP-Rule" id="MF_00289"/>
    </source>
</evidence>
<name>PSA_PICTO</name>
<proteinExistence type="inferred from homology"/>
<sequence length="234" mass="25873">MQQGQMAYDRAITVFSPDGRLFQVEYAREAVKKGSTALGIKFKDGVALISEKKVRSRLVEKTSLEKIQLIDDRVAAVTSGLVADARVLIDFARISDQQEKVTYGSLMNIENLVKRVADQMQQYTQYGGVRPYGVSIIFAGLDSIGPRLFDCDPAGTINEYKCVSIGAGKDQVTAYLEKEYKENLSEDEAIRMGIAALKSAVADESSMKEPEIASIKMGETFHVFTSEEVSKYLN</sequence>
<comment type="function">
    <text evidence="1">Component of the proteasome core, a large protease complex with broad specificity involved in protein degradation.</text>
</comment>
<comment type="activity regulation">
    <text evidence="1">The formation of the proteasomal ATPase PAN-20S proteasome complex, via the docking of the C-termini of PAN into the intersubunit pockets in the alpha-rings, triggers opening of the gate for substrate entry. Interconversion between the open-gate and close-gate conformations leads to a dynamic regulation of the 20S proteasome proteolysis activity.</text>
</comment>
<comment type="subunit">
    <text evidence="1">The 20S proteasome core is composed of 14 alpha and 14 beta subunits that assemble into four stacked heptameric rings, resulting in a barrel-shaped structure. The two inner rings, each composed of seven catalytic beta subunits, are sandwiched by two outer rings, each composed of seven alpha subunits. The catalytic chamber with the active sites is on the inside of the barrel. Has a gated structure, the ends of the cylinder being occluded by the N-termini of the alpha-subunits. Is capped at one or both ends by the proteasome regulatory ATPase, PAN.</text>
</comment>
<comment type="subcellular location">
    <subcellularLocation>
        <location evidence="1">Cytoplasm</location>
    </subcellularLocation>
</comment>
<comment type="similarity">
    <text evidence="1">Belongs to the peptidase T1A family.</text>
</comment>
<dbReference type="EMBL" id="AE017261">
    <property type="protein sequence ID" value="AAT43389.1"/>
    <property type="molecule type" value="Genomic_DNA"/>
</dbReference>
<dbReference type="RefSeq" id="WP_011177605.1">
    <property type="nucleotide sequence ID" value="NC_005877.1"/>
</dbReference>
<dbReference type="SMR" id="Q6L0W3"/>
<dbReference type="FunCoup" id="Q6L0W3">
    <property type="interactions" value="158"/>
</dbReference>
<dbReference type="STRING" id="263820.PTO0804"/>
<dbReference type="PaxDb" id="263820-PTO0804"/>
<dbReference type="GeneID" id="2845434"/>
<dbReference type="KEGG" id="pto:PTO0804"/>
<dbReference type="PATRIC" id="fig|263820.9.peg.839"/>
<dbReference type="eggNOG" id="arCOG00971">
    <property type="taxonomic scope" value="Archaea"/>
</dbReference>
<dbReference type="HOGENOM" id="CLU_035750_4_1_2"/>
<dbReference type="InParanoid" id="Q6L0W3"/>
<dbReference type="OrthoDB" id="9421at2157"/>
<dbReference type="Proteomes" id="UP000000438">
    <property type="component" value="Chromosome"/>
</dbReference>
<dbReference type="GO" id="GO:0005737">
    <property type="term" value="C:cytoplasm"/>
    <property type="evidence" value="ECO:0007669"/>
    <property type="project" value="UniProtKB-SubCell"/>
</dbReference>
<dbReference type="GO" id="GO:0019773">
    <property type="term" value="C:proteasome core complex, alpha-subunit complex"/>
    <property type="evidence" value="ECO:0000250"/>
    <property type="project" value="UniProtKB"/>
</dbReference>
<dbReference type="GO" id="GO:0004298">
    <property type="term" value="F:threonine-type endopeptidase activity"/>
    <property type="evidence" value="ECO:0007669"/>
    <property type="project" value="InterPro"/>
</dbReference>
<dbReference type="GO" id="GO:0010498">
    <property type="term" value="P:proteasomal protein catabolic process"/>
    <property type="evidence" value="ECO:0007669"/>
    <property type="project" value="UniProtKB-UniRule"/>
</dbReference>
<dbReference type="GO" id="GO:0006511">
    <property type="term" value="P:ubiquitin-dependent protein catabolic process"/>
    <property type="evidence" value="ECO:0007669"/>
    <property type="project" value="InterPro"/>
</dbReference>
<dbReference type="CDD" id="cd03756">
    <property type="entry name" value="proteasome_alpha_archeal"/>
    <property type="match status" value="1"/>
</dbReference>
<dbReference type="FunFam" id="3.60.20.10:FF:000004">
    <property type="entry name" value="Proteasome subunit alpha type-4"/>
    <property type="match status" value="1"/>
</dbReference>
<dbReference type="Gene3D" id="3.60.20.10">
    <property type="entry name" value="Glutamine Phosphoribosylpyrophosphate, subunit 1, domain 1"/>
    <property type="match status" value="1"/>
</dbReference>
<dbReference type="HAMAP" id="MF_00289_A">
    <property type="entry name" value="Proteasome_A_A"/>
    <property type="match status" value="1"/>
</dbReference>
<dbReference type="InterPro" id="IPR029055">
    <property type="entry name" value="Ntn_hydrolases_N"/>
</dbReference>
<dbReference type="InterPro" id="IPR050115">
    <property type="entry name" value="Proteasome_alpha"/>
</dbReference>
<dbReference type="InterPro" id="IPR023332">
    <property type="entry name" value="Proteasome_alpha-type"/>
</dbReference>
<dbReference type="InterPro" id="IPR019982">
    <property type="entry name" value="Proteasome_asu_arc"/>
</dbReference>
<dbReference type="InterPro" id="IPR000426">
    <property type="entry name" value="Proteasome_asu_N"/>
</dbReference>
<dbReference type="InterPro" id="IPR001353">
    <property type="entry name" value="Proteasome_sua/b"/>
</dbReference>
<dbReference type="NCBIfam" id="TIGR03633">
    <property type="entry name" value="arc_protsome_A"/>
    <property type="match status" value="1"/>
</dbReference>
<dbReference type="NCBIfam" id="NF003075">
    <property type="entry name" value="PRK03996.1"/>
    <property type="match status" value="1"/>
</dbReference>
<dbReference type="PANTHER" id="PTHR11599">
    <property type="entry name" value="PROTEASOME SUBUNIT ALPHA/BETA"/>
    <property type="match status" value="1"/>
</dbReference>
<dbReference type="Pfam" id="PF00227">
    <property type="entry name" value="Proteasome"/>
    <property type="match status" value="1"/>
</dbReference>
<dbReference type="Pfam" id="PF10584">
    <property type="entry name" value="Proteasome_A_N"/>
    <property type="match status" value="1"/>
</dbReference>
<dbReference type="SMART" id="SM00948">
    <property type="entry name" value="Proteasome_A_N"/>
    <property type="match status" value="1"/>
</dbReference>
<dbReference type="SUPFAM" id="SSF56235">
    <property type="entry name" value="N-terminal nucleophile aminohydrolases (Ntn hydrolases)"/>
    <property type="match status" value="1"/>
</dbReference>
<dbReference type="PROSITE" id="PS00388">
    <property type="entry name" value="PROTEASOME_ALPHA_1"/>
    <property type="match status" value="1"/>
</dbReference>
<dbReference type="PROSITE" id="PS51475">
    <property type="entry name" value="PROTEASOME_ALPHA_2"/>
    <property type="match status" value="1"/>
</dbReference>
<accession>Q6L0W3</accession>
<protein>
    <recommendedName>
        <fullName evidence="1">Proteasome subunit alpha</fullName>
    </recommendedName>
    <alternativeName>
        <fullName evidence="1">20S proteasome alpha subunit</fullName>
    </alternativeName>
    <alternativeName>
        <fullName evidence="1">Proteasome core protein PsmA</fullName>
    </alternativeName>
</protein>
<keyword id="KW-0963">Cytoplasm</keyword>
<keyword id="KW-0647">Proteasome</keyword>
<gene>
    <name evidence="1" type="primary">psmA</name>
    <name type="ordered locus">PTO0804</name>
</gene>
<feature type="chain" id="PRO_0000124180" description="Proteasome subunit alpha">
    <location>
        <begin position="1"/>
        <end position="234"/>
    </location>
</feature>